<dbReference type="PIR" id="A60215">
    <property type="entry name" value="A60215"/>
</dbReference>
<dbReference type="GO" id="GO:0043209">
    <property type="term" value="C:myelin sheath"/>
    <property type="evidence" value="ECO:0007669"/>
    <property type="project" value="UniProtKB-SubCell"/>
</dbReference>
<dbReference type="GO" id="GO:0005886">
    <property type="term" value="C:plasma membrane"/>
    <property type="evidence" value="ECO:0007669"/>
    <property type="project" value="UniProtKB-KW"/>
</dbReference>
<dbReference type="GO" id="GO:0019911">
    <property type="term" value="F:structural constituent of myelin sheath"/>
    <property type="evidence" value="ECO:0007669"/>
    <property type="project" value="InterPro"/>
</dbReference>
<dbReference type="InterPro" id="IPR000548">
    <property type="entry name" value="Myelin_BP"/>
</dbReference>
<dbReference type="PANTHER" id="PTHR11429">
    <property type="entry name" value="MYELIN BASIC PROTEIN"/>
    <property type="match status" value="1"/>
</dbReference>
<dbReference type="PANTHER" id="PTHR11429:SF0">
    <property type="entry name" value="MYELIN BASIC PROTEIN"/>
    <property type="match status" value="1"/>
</dbReference>
<dbReference type="Pfam" id="PF01669">
    <property type="entry name" value="Myelin_MBP"/>
    <property type="match status" value="1"/>
</dbReference>
<dbReference type="PROSITE" id="PS00569">
    <property type="entry name" value="MYELIN_MBP"/>
    <property type="match status" value="1"/>
</dbReference>
<proteinExistence type="evidence at protein level"/>
<gene>
    <name type="primary">MBP</name>
</gene>
<feature type="chain" id="PRO_0000158998" description="Myelin basic protein">
    <location>
        <begin position="1" status="less than"/>
        <end position="128"/>
    </location>
</feature>
<feature type="region of interest" description="Disordered" evidence="2">
    <location>
        <begin position="1"/>
        <end position="24"/>
    </location>
</feature>
<feature type="region of interest" description="Disordered" evidence="2">
    <location>
        <begin position="82"/>
        <end position="128"/>
    </location>
</feature>
<feature type="compositionally biased region" description="Basic and acidic residues" evidence="2">
    <location>
        <begin position="11"/>
        <end position="23"/>
    </location>
</feature>
<feature type="compositionally biased region" description="Basic and acidic residues" evidence="2">
    <location>
        <begin position="96"/>
        <end position="107"/>
    </location>
</feature>
<feature type="non-consecutive residues" evidence="4">
    <location>
        <begin position="5"/>
        <end position="6"/>
    </location>
</feature>
<feature type="non-terminal residue" evidence="4">
    <location>
        <position position="1"/>
    </location>
</feature>
<accession>P98190</accession>
<name>MBP_CAROB</name>
<organism>
    <name type="scientific">Carcharhinus obscurus</name>
    <name type="common">Dusky shark</name>
    <name type="synonym">Squalus obscurus</name>
    <dbReference type="NCBI Taxonomy" id="7807"/>
    <lineage>
        <taxon>Eukaryota</taxon>
        <taxon>Metazoa</taxon>
        <taxon>Chordata</taxon>
        <taxon>Craniata</taxon>
        <taxon>Vertebrata</taxon>
        <taxon>Chondrichthyes</taxon>
        <taxon>Elasmobranchii</taxon>
        <taxon>Galeomorphii</taxon>
        <taxon>Galeoidea</taxon>
        <taxon>Carcharhiniformes</taxon>
        <taxon>Carcharhinidae</taxon>
        <taxon>Carcharhinus</taxon>
    </lineage>
</organism>
<sequence>AGGAHFFGQEGSRKVPEKGKEPATRSVLMAPTLHKAHQAAGRQTDDSAVVHFFKNMMSPKAPVQQKARSGASRAITKFIWGTDGQRPHYGASGSSKSREAYRGRKDGSGTLSSFFKMGKKGEGSPARR</sequence>
<evidence type="ECO:0000255" key="1"/>
<evidence type="ECO:0000256" key="2">
    <source>
        <dbReference type="SAM" id="MobiDB-lite"/>
    </source>
</evidence>
<evidence type="ECO:0000269" key="3">
    <source>
    </source>
</evidence>
<evidence type="ECO:0000303" key="4">
    <source>
    </source>
</evidence>
<evidence type="ECO:0000305" key="5"/>
<comment type="function">
    <text evidence="5">This protein may function to maintain proper structure of myelin.</text>
</comment>
<comment type="subcellular location">
    <subcellularLocation>
        <location>Myelin membrane</location>
        <topology>Peripheral membrane protein</topology>
        <orientation>Cytoplasmic side</orientation>
    </subcellularLocation>
    <text>Cytoplasmic side of myelin.</text>
</comment>
<comment type="PTM">
    <text evidence="3 5">The N-terminus is blocked.</text>
</comment>
<comment type="similarity">
    <text evidence="1">Belongs to the myelin basic protein family.</text>
</comment>
<protein>
    <recommendedName>
        <fullName>Myelin basic protein</fullName>
        <shortName>MBP</shortName>
    </recommendedName>
</protein>
<keyword id="KW-1003">Cell membrane</keyword>
<keyword id="KW-0903">Direct protein sequencing</keyword>
<keyword id="KW-0472">Membrane</keyword>
<reference evidence="5" key="1">
    <citation type="journal article" date="1990" name="J. Neurochem.">
        <title>Shark myelin basic protein: amino acid sequence, secondary structure, and self-association.</title>
        <authorList>
            <person name="Milne T.J."/>
            <person name="Atkins A.R."/>
            <person name="Warren J.A."/>
            <person name="Auton W.P."/>
            <person name="Smith R."/>
        </authorList>
    </citation>
    <scope>PROTEIN SEQUENCE</scope>
    <source>
        <tissue evidence="3">Brain</tissue>
    </source>
</reference>